<name>RTX1B_ACTPL</name>
<sequence length="707" mass="79664">MDFYREEDYGLYALTILAQYHNIAVNPEELKHKFDLEGKGLDLTAWLLAAKSLELKAKQVKKAIDRLAFIALPALVWREDGKHFILTKIDNEAKKYLIFDLETHNPRILEQAEFESLYQGKLILVASRASIVGKLAKFDFTWFIPAVIKYRKIFIETLIVSIFLQIFALITPLFFQVVMDKVLVHRGFSTLNVITVALAIVVLFEIVLNGLRTYIFAHSTSRIDVELGARLFRHLLALPISYFENRRVGDTVARVRELDQIRNFLTGQALTSVLDLMFSFIFFAVMWYYSPKLTLVILGSLPFYMGWSIFISPILRRRLDEKFARGADNQSFLVESVTAINTIKALAVTPQMTNTWDKQLASYVSAGFRVTTLATIGQQGVQFIQKVVMVITLWLGAHLVISGDLSIGQLIAFNMLSGQVIAPVIRLAQLWQDFQQVGISVTRLGDVLNSPTESYQGKLALPEIKGDITFRNIRFRYKPDAPVILNDVNLSIQQGEVIGIVGRSGSGKSTLTKLIQRFYIPENGQVLIDGHDLALADPNWLRRQVGVVLQDNVLLNRSIRDNIALADPGMPMEKIVHAAKLAGAHEFISELREGYNTIVGEQGAGLSGGQRQRIAIARALVNNPKILIFDEATSALDYESEHIIMRNMHQICKGRTVIIIAHRLSTVKNADRIIVMEKGQIVEQGKHKELLADPNGLYHYLHQLQSE</sequence>
<evidence type="ECO:0000250" key="1"/>
<evidence type="ECO:0000255" key="2">
    <source>
        <dbReference type="PROSITE-ProRule" id="PRU00362"/>
    </source>
</evidence>
<evidence type="ECO:0000255" key="3">
    <source>
        <dbReference type="PROSITE-ProRule" id="PRU00434"/>
    </source>
</evidence>
<evidence type="ECO:0000255" key="4">
    <source>
        <dbReference type="PROSITE-ProRule" id="PRU00441"/>
    </source>
</evidence>
<evidence type="ECO:0000305" key="5"/>
<organism>
    <name type="scientific">Actinobacillus pleuropneumoniae</name>
    <name type="common">Haemophilus pleuropneumoniae</name>
    <dbReference type="NCBI Taxonomy" id="715"/>
    <lineage>
        <taxon>Bacteria</taxon>
        <taxon>Pseudomonadati</taxon>
        <taxon>Pseudomonadota</taxon>
        <taxon>Gammaproteobacteria</taxon>
        <taxon>Pasteurellales</taxon>
        <taxon>Pasteurellaceae</taxon>
        <taxon>Actinobacillus</taxon>
    </lineage>
</organism>
<accession>P26760</accession>
<protein>
    <recommendedName>
        <fullName>Toxin RTX-I translocation ATP-binding protein</fullName>
    </recommendedName>
    <alternativeName>
        <fullName>APX-IB</fullName>
    </alternativeName>
    <alternativeName>
        <fullName>Cytolysin IB</fullName>
        <shortName>CLY-IB</shortName>
    </alternativeName>
    <alternativeName>
        <fullName>HLY-IB</fullName>
    </alternativeName>
    <alternativeName>
        <fullName>RTX-I toxin determinant B</fullName>
    </alternativeName>
</protein>
<reference key="1">
    <citation type="journal article" date="1991" name="J. Bacteriol.">
        <title>The Actinobacillus pleuropneumoniae hemolysin determinant: unlinked appCA and appBD loci flanked by pseudogenes.</title>
        <authorList>
            <person name="Chang Y.-F."/>
            <person name="Young R."/>
            <person name="Struck D.K."/>
        </authorList>
    </citation>
    <scope>NUCLEOTIDE SEQUENCE [GENOMIC DNA]</scope>
    <source>
        <strain>Serotype 5</strain>
    </source>
</reference>
<reference key="2">
    <citation type="journal article" date="1991" name="Infect. Immun.">
        <title>Cytolysins of Actinobacillus pleuropneumoniae serotype 9.</title>
        <authorList>
            <person name="Smits M.A."/>
            <person name="Briaire J."/>
            <person name="Jansen R."/>
            <person name="Smith H.E."/>
            <person name="Kamp E.M."/>
            <person name="Gielkens A.L.J."/>
        </authorList>
    </citation>
    <scope>NUCLEOTIDE SEQUENCE [GENOMIC DNA]</scope>
    <source>
        <strain>Isolate CVI 13261 / Serotype 9</strain>
    </source>
</reference>
<reference key="3">
    <citation type="journal article" date="1994" name="Gene">
        <title>Sequence analysis and transcription of the apxI operon (hemolysin I) from Actinobacillus pleuropneumoniae.</title>
        <authorList>
            <person name="Frey J."/>
            <person name="Haldimann A."/>
            <person name="Nicolet J."/>
            <person name="Boffini A."/>
            <person name="Prentki P."/>
        </authorList>
    </citation>
    <scope>NUCLEOTIDE SEQUENCE [GENOMIC DNA]</scope>
    <source>
        <strain>ATCC 27088 / DSM 13472 / CCM 5869 / S4074 / Serotype 1</strain>
    </source>
</reference>
<reference key="4">
    <citation type="journal article" date="1994" name="Mol. Microbiol.">
        <title>The RTX haemolysins ApxI and ApxII are major virulence factors of the swine pathogen Actinobacillus pleuropneumoniae: evidence from mutational analysis.</title>
        <authorList>
            <person name="Tascon R.I."/>
            <person name="Vazquez-Boland J.A."/>
            <person name="Gutierrez-Martin C.B."/>
            <person name="Rodriguez-Barbosa I."/>
            <person name="Rodriguez-Ferri E.F."/>
        </authorList>
    </citation>
    <scope>NUCLEOTIDE SEQUENCE [GENOMIC DNA] OF 219-326</scope>
    <scope>CHARACTERIZATION IN VIVO</scope>
    <source>
        <strain>CM5 / Serotype 1</strain>
    </source>
</reference>
<feature type="chain" id="PRO_0000092390" description="Toxin RTX-I translocation ATP-binding protein">
    <location>
        <begin position="1"/>
        <end position="707"/>
    </location>
</feature>
<feature type="transmembrane region" description="Helical" evidence="4">
    <location>
        <begin position="158"/>
        <end position="178"/>
    </location>
</feature>
<feature type="transmembrane region" description="Helical" evidence="4">
    <location>
        <begin position="188"/>
        <end position="208"/>
    </location>
</feature>
<feature type="transmembrane region" description="Helical" evidence="4">
    <location>
        <begin position="295"/>
        <end position="315"/>
    </location>
</feature>
<feature type="transmembrane region" description="Helical" evidence="4">
    <location>
        <begin position="387"/>
        <end position="407"/>
    </location>
</feature>
<feature type="transmembrane region" description="Helical" evidence="4">
    <location>
        <begin position="410"/>
        <end position="430"/>
    </location>
</feature>
<feature type="domain" description="Peptidase C39" evidence="2">
    <location>
        <begin position="1"/>
        <end position="125"/>
    </location>
</feature>
<feature type="domain" description="ABC transmembrane type-1" evidence="4">
    <location>
        <begin position="154"/>
        <end position="436"/>
    </location>
</feature>
<feature type="domain" description="ABC transporter" evidence="2 3">
    <location>
        <begin position="468"/>
        <end position="703"/>
    </location>
</feature>
<feature type="active site" evidence="2">
    <location>
        <position position="83"/>
    </location>
</feature>
<feature type="binding site" evidence="2 3">
    <location>
        <begin position="502"/>
        <end position="509"/>
    </location>
    <ligand>
        <name>ATP</name>
        <dbReference type="ChEBI" id="CHEBI:30616"/>
    </ligand>
</feature>
<feature type="sequence variant" description="In strain: Serotype 5.">
    <original>EQA</original>
    <variation>KQT</variation>
    <location>
        <begin position="110"/>
        <end position="112"/>
    </location>
</feature>
<feature type="sequence variant" description="In strain: Serotype 5.">
    <original>D</original>
    <variation>H</variation>
    <location>
        <position position="328"/>
    </location>
</feature>
<feature type="sequence variant" description="In strain: Serotype 5.">
    <original>R</original>
    <variation>V</variation>
    <location>
        <position position="517"/>
    </location>
</feature>
<feature type="sequence variant" description="In strain: Serotype 5.">
    <original>N</original>
    <variation>G</variation>
    <location>
        <position position="556"/>
    </location>
</feature>
<feature type="sequence variant" description="In strain: S 4074 / Serotype 1.">
    <original>GQR</original>
    <variation>RAT</variation>
    <location>
        <begin position="609"/>
        <end position="611"/>
    </location>
</feature>
<feature type="sequence variant" description="In strain: Serotype 5.">
    <original>RQ</original>
    <variation>PN</variation>
    <location>
        <begin position="611"/>
        <end position="612"/>
    </location>
</feature>
<feature type="sequence variant" description="In strain: Serotype 5.">
    <original>DR</original>
    <variation>AS</variation>
    <location>
        <begin position="671"/>
        <end position="672"/>
    </location>
</feature>
<feature type="sequence variant" description="In strain: Serotype 5.">
    <original>A</original>
    <variation>R</variation>
    <location>
        <position position="692"/>
    </location>
</feature>
<gene>
    <name type="primary">apxIB</name>
    <name type="synonym">appB</name>
    <name type="synonym">clyIB</name>
    <name type="synonym">hlyIB</name>
</gene>
<keyword id="KW-0067">ATP-binding</keyword>
<keyword id="KW-1003">Cell membrane</keyword>
<keyword id="KW-0204">Cytolysis</keyword>
<keyword id="KW-0354">Hemolysis</keyword>
<keyword id="KW-0472">Membrane</keyword>
<keyword id="KW-0547">Nucleotide-binding</keyword>
<keyword id="KW-0812">Transmembrane</keyword>
<keyword id="KW-1133">Transmembrane helix</keyword>
<keyword id="KW-0813">Transport</keyword>
<dbReference type="EMBL" id="M65808">
    <property type="protein sequence ID" value="AAB00966.1"/>
    <property type="molecule type" value="Genomic_DNA"/>
</dbReference>
<dbReference type="EMBL" id="X61112">
    <property type="protein sequence ID" value="CAA43425.1"/>
    <property type="molecule type" value="Genomic_DNA"/>
</dbReference>
<dbReference type="EMBL" id="X68595">
    <property type="protein sequence ID" value="CAA48587.1"/>
    <property type="molecule type" value="Genomic_DNA"/>
</dbReference>
<dbReference type="PIR" id="D43599">
    <property type="entry name" value="D43599"/>
</dbReference>
<dbReference type="SMR" id="P26760"/>
<dbReference type="OrthoDB" id="6828292at2"/>
<dbReference type="GO" id="GO:0005886">
    <property type="term" value="C:plasma membrane"/>
    <property type="evidence" value="ECO:0007669"/>
    <property type="project" value="UniProtKB-SubCell"/>
</dbReference>
<dbReference type="GO" id="GO:0030256">
    <property type="term" value="C:type I protein secretion system complex"/>
    <property type="evidence" value="ECO:0007669"/>
    <property type="project" value="InterPro"/>
</dbReference>
<dbReference type="GO" id="GO:0140359">
    <property type="term" value="F:ABC-type transporter activity"/>
    <property type="evidence" value="ECO:0007669"/>
    <property type="project" value="InterPro"/>
</dbReference>
<dbReference type="GO" id="GO:0005524">
    <property type="term" value="F:ATP binding"/>
    <property type="evidence" value="ECO:0007669"/>
    <property type="project" value="UniProtKB-KW"/>
</dbReference>
<dbReference type="GO" id="GO:0016887">
    <property type="term" value="F:ATP hydrolysis activity"/>
    <property type="evidence" value="ECO:0007669"/>
    <property type="project" value="InterPro"/>
</dbReference>
<dbReference type="GO" id="GO:0034040">
    <property type="term" value="F:ATPase-coupled lipid transmembrane transporter activity"/>
    <property type="evidence" value="ECO:0007669"/>
    <property type="project" value="TreeGrafter"/>
</dbReference>
<dbReference type="GO" id="GO:0008233">
    <property type="term" value="F:peptidase activity"/>
    <property type="evidence" value="ECO:0007669"/>
    <property type="project" value="InterPro"/>
</dbReference>
<dbReference type="GO" id="GO:0031640">
    <property type="term" value="P:killing of cells of another organism"/>
    <property type="evidence" value="ECO:0007669"/>
    <property type="project" value="UniProtKB-KW"/>
</dbReference>
<dbReference type="GO" id="GO:0030253">
    <property type="term" value="P:protein secretion by the type I secretion system"/>
    <property type="evidence" value="ECO:0007669"/>
    <property type="project" value="InterPro"/>
</dbReference>
<dbReference type="GO" id="GO:0006508">
    <property type="term" value="P:proteolysis"/>
    <property type="evidence" value="ECO:0007669"/>
    <property type="project" value="InterPro"/>
</dbReference>
<dbReference type="CDD" id="cd18588">
    <property type="entry name" value="ABC_6TM_CyaB_HlyB_like"/>
    <property type="match status" value="1"/>
</dbReference>
<dbReference type="CDD" id="cd03252">
    <property type="entry name" value="ABCC_Hemolysin"/>
    <property type="match status" value="1"/>
</dbReference>
<dbReference type="CDD" id="cd02417">
    <property type="entry name" value="Peptidase_C39_likeA"/>
    <property type="match status" value="1"/>
</dbReference>
<dbReference type="FunFam" id="3.40.50.300:FF:000299">
    <property type="entry name" value="ABC transporter ATP-binding protein/permease"/>
    <property type="match status" value="1"/>
</dbReference>
<dbReference type="FunFam" id="1.20.1560.10:FF:000056">
    <property type="entry name" value="Alpha-hemolysin translocation ATP-binding protein HlyB"/>
    <property type="match status" value="1"/>
</dbReference>
<dbReference type="FunFam" id="3.90.70.10:FF:000148">
    <property type="entry name" value="Alpha-hemolysin translocation ATP-binding protein HlyB"/>
    <property type="match status" value="1"/>
</dbReference>
<dbReference type="Gene3D" id="1.20.1560.10">
    <property type="entry name" value="ABC transporter type 1, transmembrane domain"/>
    <property type="match status" value="1"/>
</dbReference>
<dbReference type="Gene3D" id="3.90.70.10">
    <property type="entry name" value="Cysteine proteinases"/>
    <property type="match status" value="1"/>
</dbReference>
<dbReference type="Gene3D" id="3.40.50.300">
    <property type="entry name" value="P-loop containing nucleotide triphosphate hydrolases"/>
    <property type="match status" value="1"/>
</dbReference>
<dbReference type="InterPro" id="IPR003593">
    <property type="entry name" value="AAA+_ATPase"/>
</dbReference>
<dbReference type="InterPro" id="IPR011527">
    <property type="entry name" value="ABC1_TM_dom"/>
</dbReference>
<dbReference type="InterPro" id="IPR036640">
    <property type="entry name" value="ABC1_TM_sf"/>
</dbReference>
<dbReference type="InterPro" id="IPR003439">
    <property type="entry name" value="ABC_transporter-like_ATP-bd"/>
</dbReference>
<dbReference type="InterPro" id="IPR017871">
    <property type="entry name" value="ABC_transporter-like_CS"/>
</dbReference>
<dbReference type="InterPro" id="IPR010132">
    <property type="entry name" value="ATPase_T1SS_HlyB"/>
</dbReference>
<dbReference type="InterPro" id="IPR027417">
    <property type="entry name" value="P-loop_NTPase"/>
</dbReference>
<dbReference type="InterPro" id="IPR005074">
    <property type="entry name" value="Peptidase_C39"/>
</dbReference>
<dbReference type="InterPro" id="IPR039395">
    <property type="entry name" value="Peptidase_C39-like_A"/>
</dbReference>
<dbReference type="InterPro" id="IPR039421">
    <property type="entry name" value="Type_1_exporter"/>
</dbReference>
<dbReference type="NCBIfam" id="TIGR01846">
    <property type="entry name" value="type_I_sec_HlyB"/>
    <property type="match status" value="1"/>
</dbReference>
<dbReference type="PANTHER" id="PTHR24221">
    <property type="entry name" value="ATP-BINDING CASSETTE SUB-FAMILY B"/>
    <property type="match status" value="1"/>
</dbReference>
<dbReference type="PANTHER" id="PTHR24221:SF647">
    <property type="entry name" value="BLL6336 PROTEIN"/>
    <property type="match status" value="1"/>
</dbReference>
<dbReference type="Pfam" id="PF00664">
    <property type="entry name" value="ABC_membrane"/>
    <property type="match status" value="1"/>
</dbReference>
<dbReference type="Pfam" id="PF00005">
    <property type="entry name" value="ABC_tran"/>
    <property type="match status" value="1"/>
</dbReference>
<dbReference type="Pfam" id="PF03412">
    <property type="entry name" value="Peptidase_C39"/>
    <property type="match status" value="1"/>
</dbReference>
<dbReference type="SMART" id="SM00382">
    <property type="entry name" value="AAA"/>
    <property type="match status" value="1"/>
</dbReference>
<dbReference type="SUPFAM" id="SSF90123">
    <property type="entry name" value="ABC transporter transmembrane region"/>
    <property type="match status" value="1"/>
</dbReference>
<dbReference type="SUPFAM" id="SSF52540">
    <property type="entry name" value="P-loop containing nucleoside triphosphate hydrolases"/>
    <property type="match status" value="1"/>
</dbReference>
<dbReference type="PROSITE" id="PS50929">
    <property type="entry name" value="ABC_TM1F"/>
    <property type="match status" value="1"/>
</dbReference>
<dbReference type="PROSITE" id="PS00211">
    <property type="entry name" value="ABC_TRANSPORTER_1"/>
    <property type="match status" value="1"/>
</dbReference>
<dbReference type="PROSITE" id="PS50893">
    <property type="entry name" value="ABC_TRANSPORTER_2"/>
    <property type="match status" value="1"/>
</dbReference>
<dbReference type="PROSITE" id="PS50990">
    <property type="entry name" value="PEPTIDASE_C39"/>
    <property type="match status" value="1"/>
</dbReference>
<comment type="function">
    <text>Involved in the transport of the toxin RTX-I as well as that of RTX-II.</text>
</comment>
<comment type="subunit">
    <text evidence="1">Homodimer.</text>
</comment>
<comment type="subcellular location">
    <subcellularLocation>
        <location>Cell membrane</location>
        <topology>Multi-pass membrane protein</topology>
    </subcellularLocation>
</comment>
<comment type="miscellaneous">
    <text>The sequence shown is that of serotype 9.</text>
</comment>
<comment type="miscellaneous">
    <text>In strain CM15 (serotype 1), disruption of this gene prevents production of both RTX-I and RTX-II toxin, and no hemolytic activity in mice or pigs.</text>
</comment>
<comment type="similarity">
    <text evidence="5">Belongs to the ABC transporter superfamily. Protein-1 exporter (TC 3.A.1.109) family.</text>
</comment>
<comment type="caution">
    <text evidence="5">Tyr-9 is present instead of the conserved Cys which is expected to be the active site residue of peptidase C39. Thus they are presumed to be without peptidase activity.</text>
</comment>
<proteinExistence type="evidence at protein level"/>